<comment type="function">
    <text evidence="1">Thiol-specific peroxidase that catalyzes the reduction of hydrogen peroxide and organic hydroperoxides to water and alcohols, respectively. Plays a role in cell protection against oxidative stress by detoxifying peroxides.</text>
</comment>
<comment type="catalytic activity">
    <reaction evidence="3">
        <text>a hydroperoxide + [thioredoxin]-dithiol = an alcohol + [thioredoxin]-disulfide + H2O</text>
        <dbReference type="Rhea" id="RHEA:62620"/>
        <dbReference type="Rhea" id="RHEA-COMP:10698"/>
        <dbReference type="Rhea" id="RHEA-COMP:10700"/>
        <dbReference type="ChEBI" id="CHEBI:15377"/>
        <dbReference type="ChEBI" id="CHEBI:29950"/>
        <dbReference type="ChEBI" id="CHEBI:30879"/>
        <dbReference type="ChEBI" id="CHEBI:35924"/>
        <dbReference type="ChEBI" id="CHEBI:50058"/>
        <dbReference type="EC" id="1.11.1.24"/>
    </reaction>
</comment>
<comment type="similarity">
    <text evidence="5">Belongs to the peroxiredoxin family. AhpC/Prx1 subfamily.</text>
</comment>
<sequence length="203" mass="22467">MVSVGKKAPDFEMAGFYKGEFKTFRLSEYLGKWVVLCFYPGDFTFVUATEVSAVAEKYPEFQKLGVEVLSVSVDSVFVHKMWNDNELSKMVEGGIPFPMLSDGGGNVGTLYGVYDPEAGVENRGRFLIDPDGIIQGYEVLILPVGRNVSETLRQIQAFQLVRETKGAEVAPSGWKPGKKTLKPGPGLVGNVYKEWSVKEAFED</sequence>
<feature type="chain" id="PRO_0000391436" description="Selenocysteine-containing peroxiredoxin PrxU">
    <location>
        <begin position="1"/>
        <end position="203"/>
    </location>
</feature>
<feature type="domain" description="Thioredoxin" evidence="2">
    <location>
        <begin position="2"/>
        <end position="160"/>
    </location>
</feature>
<feature type="active site" evidence="1">
    <location>
        <position position="47"/>
    </location>
</feature>
<feature type="non-standard amino acid" description="Selenocysteine" evidence="3">
    <location>
        <position position="47"/>
    </location>
</feature>
<feature type="sequence conflict" description="In Ref. 1; AA sequence." evidence="5" ref="1">
    <original>F</original>
    <variation>P</variation>
    <location>
        <position position="24"/>
    </location>
</feature>
<evidence type="ECO:0000250" key="1">
    <source>
        <dbReference type="UniProtKB" id="P0A251"/>
    </source>
</evidence>
<evidence type="ECO:0000255" key="2">
    <source>
        <dbReference type="PROSITE-ProRule" id="PRU00691"/>
    </source>
</evidence>
<evidence type="ECO:0000269" key="3">
    <source>
    </source>
</evidence>
<evidence type="ECO:0000303" key="4">
    <source>
    </source>
</evidence>
<evidence type="ECO:0000305" key="5"/>
<gene>
    <name evidence="4" type="primary">prxU</name>
</gene>
<accession>Q9L3Q5</accession>
<reference key="1">
    <citation type="journal article" date="2001" name="Biol. Chem.">
        <title>A selenocysteine-containing peroxiredoxin from the strictly anaerobic organism Eubacterium acidaminophilum.</title>
        <authorList>
            <person name="Sohling B."/>
            <person name="Parther T."/>
            <person name="Rucknagel K.P."/>
            <person name="Wagner M.A."/>
            <person name="Andreesen J.R."/>
        </authorList>
    </citation>
    <scope>NUCLEOTIDE SEQUENCE [GENOMIC DNA]</scope>
    <scope>PROTEIN SEQUENCE OF 1-30</scope>
    <scope>SELENOCYSTEINE AT SEC-47</scope>
    <source>
        <strain>ATCC 49065 / DSM 3953 / al-2</strain>
    </source>
</reference>
<organism>
    <name type="scientific">Peptoclostridium acidaminophilum</name>
    <name type="common">Eubacterium acidaminophilum</name>
    <dbReference type="NCBI Taxonomy" id="1731"/>
    <lineage>
        <taxon>Bacteria</taxon>
        <taxon>Bacillati</taxon>
        <taxon>Bacillota</taxon>
        <taxon>Clostridia</taxon>
        <taxon>Peptostreptococcales</taxon>
        <taxon>Peptoclostridiaceae</taxon>
        <taxon>Peptoclostridium</taxon>
    </lineage>
</organism>
<name>PRXU_PEPAC</name>
<keyword id="KW-0049">Antioxidant</keyword>
<keyword id="KW-0903">Direct protein sequencing</keyword>
<keyword id="KW-0560">Oxidoreductase</keyword>
<keyword id="KW-0575">Peroxidase</keyword>
<keyword id="KW-0676">Redox-active center</keyword>
<keyword id="KW-0712">Selenocysteine</keyword>
<dbReference type="EC" id="1.11.1.24" evidence="3"/>
<dbReference type="EMBL" id="AJ271724">
    <property type="protein sequence ID" value="CAB71140.1"/>
    <property type="molecule type" value="Genomic_DNA"/>
</dbReference>
<dbReference type="GO" id="GO:0005829">
    <property type="term" value="C:cytosol"/>
    <property type="evidence" value="ECO:0007669"/>
    <property type="project" value="TreeGrafter"/>
</dbReference>
<dbReference type="GO" id="GO:0008379">
    <property type="term" value="F:thioredoxin peroxidase activity"/>
    <property type="evidence" value="ECO:0007669"/>
    <property type="project" value="TreeGrafter"/>
</dbReference>
<dbReference type="GO" id="GO:0045454">
    <property type="term" value="P:cell redox homeostasis"/>
    <property type="evidence" value="ECO:0007669"/>
    <property type="project" value="TreeGrafter"/>
</dbReference>
<dbReference type="GO" id="GO:0033554">
    <property type="term" value="P:cellular response to stress"/>
    <property type="evidence" value="ECO:0007669"/>
    <property type="project" value="TreeGrafter"/>
</dbReference>
<dbReference type="GO" id="GO:0042744">
    <property type="term" value="P:hydrogen peroxide catabolic process"/>
    <property type="evidence" value="ECO:0007669"/>
    <property type="project" value="TreeGrafter"/>
</dbReference>
<dbReference type="GO" id="GO:0006979">
    <property type="term" value="P:response to oxidative stress"/>
    <property type="evidence" value="ECO:0007669"/>
    <property type="project" value="TreeGrafter"/>
</dbReference>
<dbReference type="CDD" id="cd03015">
    <property type="entry name" value="PRX_Typ2cys"/>
    <property type="match status" value="1"/>
</dbReference>
<dbReference type="Gene3D" id="3.40.30.10">
    <property type="entry name" value="Glutaredoxin"/>
    <property type="match status" value="1"/>
</dbReference>
<dbReference type="InterPro" id="IPR000866">
    <property type="entry name" value="AhpC/TSA"/>
</dbReference>
<dbReference type="InterPro" id="IPR050217">
    <property type="entry name" value="Peroxiredoxin"/>
</dbReference>
<dbReference type="InterPro" id="IPR024706">
    <property type="entry name" value="Peroxiredoxin_AhpC-typ"/>
</dbReference>
<dbReference type="InterPro" id="IPR019479">
    <property type="entry name" value="Peroxiredoxin_C"/>
</dbReference>
<dbReference type="InterPro" id="IPR036249">
    <property type="entry name" value="Thioredoxin-like_sf"/>
</dbReference>
<dbReference type="InterPro" id="IPR013766">
    <property type="entry name" value="Thioredoxin_domain"/>
</dbReference>
<dbReference type="NCBIfam" id="NF040737">
    <property type="entry name" value="peroxi_PrxU"/>
    <property type="match status" value="1"/>
</dbReference>
<dbReference type="PANTHER" id="PTHR10681:SF121">
    <property type="entry name" value="ALKYL HYDROPEROXIDE REDUCTASE C"/>
    <property type="match status" value="1"/>
</dbReference>
<dbReference type="PANTHER" id="PTHR10681">
    <property type="entry name" value="THIOREDOXIN PEROXIDASE"/>
    <property type="match status" value="1"/>
</dbReference>
<dbReference type="Pfam" id="PF10417">
    <property type="entry name" value="1-cysPrx_C"/>
    <property type="match status" value="1"/>
</dbReference>
<dbReference type="Pfam" id="PF00578">
    <property type="entry name" value="AhpC-TSA"/>
    <property type="match status" value="1"/>
</dbReference>
<dbReference type="PIRSF" id="PIRSF000239">
    <property type="entry name" value="AHPC"/>
    <property type="match status" value="1"/>
</dbReference>
<dbReference type="SUPFAM" id="SSF52833">
    <property type="entry name" value="Thioredoxin-like"/>
    <property type="match status" value="1"/>
</dbReference>
<dbReference type="PROSITE" id="PS51352">
    <property type="entry name" value="THIOREDOXIN_2"/>
    <property type="match status" value="1"/>
</dbReference>
<proteinExistence type="evidence at protein level"/>
<protein>
    <recommendedName>
        <fullName>Selenocysteine-containing peroxiredoxin PrxU</fullName>
        <ecNumber evidence="3">1.11.1.24</ecNumber>
    </recommendedName>
    <alternativeName>
        <fullName>Selenoperoxiredoxin PrxU</fullName>
    </alternativeName>
    <alternativeName>
        <fullName evidence="5">Thioredoxin-dependent peroxiredoxin PrxU</fullName>
    </alternativeName>
</protein>